<sequence length="382" mass="42398">MTEQRPLTIALVAGETSGDILGAGLIRALKERVPNARFVGVAGPRMQAEGCEAWYEMEELAVMGIVEVLGRLRRLLHIRADLTKRFGELKPDVFVGIDAPDFNIILEGNLKKQGIKTIHYVSPSVWAWRQKRVFKIGRATDLVLAFLPFEKAFYDKYNVPCRFIGHTMADAMPLDPDKNSARDVLGIPYDAHCLALLPGSRGAEVEMLSADFLKTAQLLRQTYPDLEIVVPLVNAKRREQFERIKAAVAPDLSVHLLDGMGREAMVASDAALLASGTAALECMLAKCPMVVGYRMKPFTFWLAKRLVKTDYVSLPNLLAGRELVKELLQEECEPQKLAAALLPLLANGKTSHAMHDTFRELHQQIRCNADEQAAQAVLELAQ</sequence>
<name>LPXB_ECO57</name>
<accession>Q8X8X7</accession>
<comment type="function">
    <text evidence="1">Condensation of UDP-2,3-diacylglucosamine and 2,3-diacylglucosamine-1-phosphate to form lipid A disaccharide, a precursor of lipid A, a phosphorylated glycolipid that anchors the lipopolysaccharide to the outer membrane of the cell.</text>
</comment>
<comment type="catalytic activity">
    <reaction evidence="1">
        <text>2-N,3-O-bis[(3R)-3-hydroxytetradecanoyl]-alpha-D-glucosaminyl 1-phosphate + UDP-2-N,3-O-bis[(3R)-3-hydroxytetradecanoyl]-alpha-D-glucosamine = lipid A disaccharide (E. coli) + UDP + H(+)</text>
        <dbReference type="Rhea" id="RHEA:22668"/>
        <dbReference type="ChEBI" id="CHEBI:15378"/>
        <dbReference type="ChEBI" id="CHEBI:57957"/>
        <dbReference type="ChEBI" id="CHEBI:58223"/>
        <dbReference type="ChEBI" id="CHEBI:58466"/>
        <dbReference type="ChEBI" id="CHEBI:78847"/>
    </reaction>
</comment>
<comment type="catalytic activity">
    <reaction evidence="1">
        <text>a lipid X + a UDP-2-N,3-O-bis[(3R)-3-hydroxyacyl]-alpha-D-glucosamine = a lipid A disaccharide + UDP + H(+)</text>
        <dbReference type="Rhea" id="RHEA:67828"/>
        <dbReference type="ChEBI" id="CHEBI:15378"/>
        <dbReference type="ChEBI" id="CHEBI:58223"/>
        <dbReference type="ChEBI" id="CHEBI:137748"/>
        <dbReference type="ChEBI" id="CHEBI:176338"/>
        <dbReference type="ChEBI" id="CHEBI:176343"/>
        <dbReference type="EC" id="2.4.1.182"/>
    </reaction>
</comment>
<comment type="pathway">
    <text evidence="1">Glycolipid biosynthesis; lipid IV(A) biosynthesis; lipid IV(A) from (3R)-3-hydroxytetradecanoyl-[acyl-carrier-protein] and UDP-N-acetyl-alpha-D-glucosamine: step 5/6.</text>
</comment>
<comment type="similarity">
    <text evidence="1">Belongs to the LpxB family.</text>
</comment>
<reference key="1">
    <citation type="journal article" date="2001" name="Nature">
        <title>Genome sequence of enterohaemorrhagic Escherichia coli O157:H7.</title>
        <authorList>
            <person name="Perna N.T."/>
            <person name="Plunkett G. III"/>
            <person name="Burland V."/>
            <person name="Mau B."/>
            <person name="Glasner J.D."/>
            <person name="Rose D.J."/>
            <person name="Mayhew G.F."/>
            <person name="Evans P.S."/>
            <person name="Gregor J."/>
            <person name="Kirkpatrick H.A."/>
            <person name="Posfai G."/>
            <person name="Hackett J."/>
            <person name="Klink S."/>
            <person name="Boutin A."/>
            <person name="Shao Y."/>
            <person name="Miller L."/>
            <person name="Grotbeck E.J."/>
            <person name="Davis N.W."/>
            <person name="Lim A."/>
            <person name="Dimalanta E.T."/>
            <person name="Potamousis K."/>
            <person name="Apodaca J."/>
            <person name="Anantharaman T.S."/>
            <person name="Lin J."/>
            <person name="Yen G."/>
            <person name="Schwartz D.C."/>
            <person name="Welch R.A."/>
            <person name="Blattner F.R."/>
        </authorList>
    </citation>
    <scope>NUCLEOTIDE SEQUENCE [LARGE SCALE GENOMIC DNA]</scope>
    <source>
        <strain>O157:H7 / EDL933 / ATCC 700927 / EHEC</strain>
    </source>
</reference>
<reference key="2">
    <citation type="journal article" date="2001" name="DNA Res.">
        <title>Complete genome sequence of enterohemorrhagic Escherichia coli O157:H7 and genomic comparison with a laboratory strain K-12.</title>
        <authorList>
            <person name="Hayashi T."/>
            <person name="Makino K."/>
            <person name="Ohnishi M."/>
            <person name="Kurokawa K."/>
            <person name="Ishii K."/>
            <person name="Yokoyama K."/>
            <person name="Han C.-G."/>
            <person name="Ohtsubo E."/>
            <person name="Nakayama K."/>
            <person name="Murata T."/>
            <person name="Tanaka M."/>
            <person name="Tobe T."/>
            <person name="Iida T."/>
            <person name="Takami H."/>
            <person name="Honda T."/>
            <person name="Sasakawa C."/>
            <person name="Ogasawara N."/>
            <person name="Yasunaga T."/>
            <person name="Kuhara S."/>
            <person name="Shiba T."/>
            <person name="Hattori M."/>
            <person name="Shinagawa H."/>
        </authorList>
    </citation>
    <scope>NUCLEOTIDE SEQUENCE [LARGE SCALE GENOMIC DNA]</scope>
    <source>
        <strain>O157:H7 / Sakai / RIMD 0509952 / EHEC</strain>
    </source>
</reference>
<organism>
    <name type="scientific">Escherichia coli O157:H7</name>
    <dbReference type="NCBI Taxonomy" id="83334"/>
    <lineage>
        <taxon>Bacteria</taxon>
        <taxon>Pseudomonadati</taxon>
        <taxon>Pseudomonadota</taxon>
        <taxon>Gammaproteobacteria</taxon>
        <taxon>Enterobacterales</taxon>
        <taxon>Enterobacteriaceae</taxon>
        <taxon>Escherichia</taxon>
    </lineage>
</organism>
<gene>
    <name evidence="1" type="primary">lpxB</name>
    <name type="ordered locus">Z0194</name>
    <name type="ordered locus">ECs0184</name>
</gene>
<protein>
    <recommendedName>
        <fullName evidence="1">Lipid-A-disaccharide synthase</fullName>
        <ecNumber evidence="1">2.4.1.182</ecNumber>
    </recommendedName>
</protein>
<keyword id="KW-0328">Glycosyltransferase</keyword>
<keyword id="KW-0441">Lipid A biosynthesis</keyword>
<keyword id="KW-0444">Lipid biosynthesis</keyword>
<keyword id="KW-0443">Lipid metabolism</keyword>
<keyword id="KW-1185">Reference proteome</keyword>
<keyword id="KW-0808">Transferase</keyword>
<dbReference type="EC" id="2.4.1.182" evidence="1"/>
<dbReference type="EMBL" id="AE005174">
    <property type="protein sequence ID" value="AAG54484.1"/>
    <property type="molecule type" value="Genomic_DNA"/>
</dbReference>
<dbReference type="EMBL" id="BA000007">
    <property type="protein sequence ID" value="BAB33607.1"/>
    <property type="molecule type" value="Genomic_DNA"/>
</dbReference>
<dbReference type="PIR" id="H85502">
    <property type="entry name" value="H85502"/>
</dbReference>
<dbReference type="PIR" id="H90651">
    <property type="entry name" value="H90651"/>
</dbReference>
<dbReference type="RefSeq" id="NP_308211.1">
    <property type="nucleotide sequence ID" value="NC_002695.1"/>
</dbReference>
<dbReference type="RefSeq" id="WP_000139661.1">
    <property type="nucleotide sequence ID" value="NZ_VOAI01000002.1"/>
</dbReference>
<dbReference type="SMR" id="Q8X8X7"/>
<dbReference type="STRING" id="155864.Z0194"/>
<dbReference type="CAZy" id="GT19">
    <property type="family name" value="Glycosyltransferase Family 19"/>
</dbReference>
<dbReference type="GeneID" id="913894"/>
<dbReference type="KEGG" id="ece:Z0194"/>
<dbReference type="KEGG" id="ecs:ECs_0184"/>
<dbReference type="PATRIC" id="fig|386585.9.peg.287"/>
<dbReference type="eggNOG" id="COG0763">
    <property type="taxonomic scope" value="Bacteria"/>
</dbReference>
<dbReference type="HOGENOM" id="CLU_036577_3_0_6"/>
<dbReference type="OMA" id="YVILPFE"/>
<dbReference type="UniPathway" id="UPA00359">
    <property type="reaction ID" value="UER00481"/>
</dbReference>
<dbReference type="Proteomes" id="UP000000558">
    <property type="component" value="Chromosome"/>
</dbReference>
<dbReference type="Proteomes" id="UP000002519">
    <property type="component" value="Chromosome"/>
</dbReference>
<dbReference type="GO" id="GO:0016020">
    <property type="term" value="C:membrane"/>
    <property type="evidence" value="ECO:0007669"/>
    <property type="project" value="GOC"/>
</dbReference>
<dbReference type="GO" id="GO:0008915">
    <property type="term" value="F:lipid-A-disaccharide synthase activity"/>
    <property type="evidence" value="ECO:0007669"/>
    <property type="project" value="UniProtKB-UniRule"/>
</dbReference>
<dbReference type="GO" id="GO:0005543">
    <property type="term" value="F:phospholipid binding"/>
    <property type="evidence" value="ECO:0007669"/>
    <property type="project" value="TreeGrafter"/>
</dbReference>
<dbReference type="GO" id="GO:0009245">
    <property type="term" value="P:lipid A biosynthetic process"/>
    <property type="evidence" value="ECO:0007669"/>
    <property type="project" value="UniProtKB-UniRule"/>
</dbReference>
<dbReference type="CDD" id="cd01635">
    <property type="entry name" value="Glycosyltransferase_GTB-type"/>
    <property type="match status" value="1"/>
</dbReference>
<dbReference type="HAMAP" id="MF_00392">
    <property type="entry name" value="LpxB"/>
    <property type="match status" value="1"/>
</dbReference>
<dbReference type="InterPro" id="IPR003835">
    <property type="entry name" value="Glyco_trans_19"/>
</dbReference>
<dbReference type="NCBIfam" id="TIGR00215">
    <property type="entry name" value="lpxB"/>
    <property type="match status" value="1"/>
</dbReference>
<dbReference type="PANTHER" id="PTHR30372">
    <property type="entry name" value="LIPID-A-DISACCHARIDE SYNTHASE"/>
    <property type="match status" value="1"/>
</dbReference>
<dbReference type="PANTHER" id="PTHR30372:SF4">
    <property type="entry name" value="LIPID-A-DISACCHARIDE SYNTHASE, MITOCHONDRIAL-RELATED"/>
    <property type="match status" value="1"/>
</dbReference>
<dbReference type="Pfam" id="PF02684">
    <property type="entry name" value="LpxB"/>
    <property type="match status" value="1"/>
</dbReference>
<dbReference type="SUPFAM" id="SSF53756">
    <property type="entry name" value="UDP-Glycosyltransferase/glycogen phosphorylase"/>
    <property type="match status" value="1"/>
</dbReference>
<evidence type="ECO:0000255" key="1">
    <source>
        <dbReference type="HAMAP-Rule" id="MF_00392"/>
    </source>
</evidence>
<feature type="chain" id="PRO_0000190166" description="Lipid-A-disaccharide synthase">
    <location>
        <begin position="1"/>
        <end position="382"/>
    </location>
</feature>
<proteinExistence type="inferred from homology"/>